<dbReference type="EMBL" id="AF270647">
    <property type="protein sequence ID" value="AAF81750.1"/>
    <property type="status" value="ALT_FRAME"/>
    <property type="molecule type" value="mRNA"/>
</dbReference>
<dbReference type="EMBL" id="AC012307">
    <property type="protein sequence ID" value="AAY24223.1"/>
    <property type="molecule type" value="Genomic_DNA"/>
</dbReference>
<dbReference type="EMBL" id="CH471207">
    <property type="protein sequence ID" value="EAW71382.1"/>
    <property type="molecule type" value="Genomic_DNA"/>
</dbReference>
<dbReference type="EMBL" id="CH471207">
    <property type="protein sequence ID" value="EAW71383.1"/>
    <property type="molecule type" value="Genomic_DNA"/>
</dbReference>
<dbReference type="EMBL" id="BC007894">
    <property type="protein sequence ID" value="AAH07894.1"/>
    <property type="status" value="ALT_INIT"/>
    <property type="molecule type" value="mRNA"/>
</dbReference>
<dbReference type="EMBL" id="BC008894">
    <property type="protein sequence ID" value="AAH08894.1"/>
    <property type="status" value="ALT_INIT"/>
    <property type="molecule type" value="mRNA"/>
</dbReference>
<dbReference type="EMBL" id="BC009998">
    <property type="protein sequence ID" value="AAH09998.1"/>
    <property type="status" value="ALT_INIT"/>
    <property type="molecule type" value="mRNA"/>
</dbReference>
<dbReference type="EMBL" id="BC012774">
    <property type="protein sequence ID" value="AAH12774.1"/>
    <property type="status" value="ALT_INIT"/>
    <property type="molecule type" value="mRNA"/>
</dbReference>
<dbReference type="EMBL" id="BC012793">
    <property type="protein sequence ID" value="AAH12793.1"/>
    <property type="status" value="ALT_INIT"/>
    <property type="molecule type" value="mRNA"/>
</dbReference>
<dbReference type="EMBL" id="BC013279">
    <property type="protein sequence ID" value="AAH13279.1"/>
    <property type="status" value="ALT_INIT"/>
    <property type="molecule type" value="mRNA"/>
</dbReference>
<dbReference type="EMBL" id="BC014076">
    <property type="protein sequence ID" value="AAH14076.1"/>
    <property type="status" value="ALT_INIT"/>
    <property type="molecule type" value="mRNA"/>
</dbReference>
<dbReference type="EMBL" id="BC014274">
    <property type="protein sequence ID" value="AAH14274.3"/>
    <property type="status" value="ALT_INIT"/>
    <property type="molecule type" value="mRNA"/>
</dbReference>
<dbReference type="EMBL" id="BC032106">
    <property type="protein sequence ID" value="AAH32106.1"/>
    <property type="status" value="ALT_INIT"/>
    <property type="molecule type" value="mRNA"/>
</dbReference>
<dbReference type="CCDS" id="CCDS2017.2"/>
<dbReference type="RefSeq" id="NP_064536.2">
    <property type="nucleotide sequence ID" value="NM_020151.4"/>
</dbReference>
<dbReference type="SMR" id="Q9NQZ5"/>
<dbReference type="BioGRID" id="121238">
    <property type="interactions" value="41"/>
</dbReference>
<dbReference type="FunCoup" id="Q9NQZ5">
    <property type="interactions" value="749"/>
</dbReference>
<dbReference type="IntAct" id="Q9NQZ5">
    <property type="interactions" value="32"/>
</dbReference>
<dbReference type="STRING" id="9606.ENSP00000338030"/>
<dbReference type="ChEMBL" id="CHEMBL3399912"/>
<dbReference type="TCDB" id="8.A.120.1.1">
    <property type="family name" value="the mitochondrial star-related lipid transfer protein (star) family"/>
</dbReference>
<dbReference type="iPTMnet" id="Q9NQZ5"/>
<dbReference type="PhosphoSitePlus" id="Q9NQZ5"/>
<dbReference type="SwissPalm" id="Q9NQZ5"/>
<dbReference type="BioMuta" id="STARD7"/>
<dbReference type="DMDM" id="215273945"/>
<dbReference type="jPOST" id="Q9NQZ5"/>
<dbReference type="MassIVE" id="Q9NQZ5"/>
<dbReference type="PaxDb" id="9606-ENSP00000338030"/>
<dbReference type="PeptideAtlas" id="Q9NQZ5"/>
<dbReference type="ProteomicsDB" id="82233"/>
<dbReference type="Pumba" id="Q9NQZ5"/>
<dbReference type="Antibodypedia" id="32404">
    <property type="antibodies" value="151 antibodies from 23 providers"/>
</dbReference>
<dbReference type="DNASU" id="56910"/>
<dbReference type="Ensembl" id="ENST00000337288.10">
    <property type="protein sequence ID" value="ENSP00000338030.5"/>
    <property type="gene ID" value="ENSG00000084090.14"/>
</dbReference>
<dbReference type="GeneID" id="56910"/>
<dbReference type="KEGG" id="hsa:56910"/>
<dbReference type="MANE-Select" id="ENST00000337288.10">
    <property type="protein sequence ID" value="ENSP00000338030.5"/>
    <property type="RefSeq nucleotide sequence ID" value="NM_020151.4"/>
    <property type="RefSeq protein sequence ID" value="NP_064536.2"/>
</dbReference>
<dbReference type="UCSC" id="uc002svm.6">
    <property type="organism name" value="human"/>
</dbReference>
<dbReference type="AGR" id="HGNC:18063"/>
<dbReference type="CTD" id="56910"/>
<dbReference type="DisGeNET" id="56910"/>
<dbReference type="GeneCards" id="STARD7"/>
<dbReference type="HGNC" id="HGNC:18063">
    <property type="gene designation" value="STARD7"/>
</dbReference>
<dbReference type="HPA" id="ENSG00000084090">
    <property type="expression patterns" value="Low tissue specificity"/>
</dbReference>
<dbReference type="MalaCards" id="STARD7"/>
<dbReference type="MIM" id="616712">
    <property type="type" value="gene"/>
</dbReference>
<dbReference type="neXtProt" id="NX_Q9NQZ5"/>
<dbReference type="OpenTargets" id="ENSG00000084090"/>
<dbReference type="PharmGKB" id="PA38285"/>
<dbReference type="VEuPathDB" id="HostDB:ENSG00000084090"/>
<dbReference type="eggNOG" id="KOG2761">
    <property type="taxonomic scope" value="Eukaryota"/>
</dbReference>
<dbReference type="GeneTree" id="ENSGT00940000157856"/>
<dbReference type="HOGENOM" id="CLU_042209_0_0_1"/>
<dbReference type="InParanoid" id="Q9NQZ5"/>
<dbReference type="OMA" id="NQLCERC"/>
<dbReference type="OrthoDB" id="1295045at2759"/>
<dbReference type="PAN-GO" id="Q9NQZ5">
    <property type="GO annotations" value="0 GO annotations based on evolutionary models"/>
</dbReference>
<dbReference type="PhylomeDB" id="Q9NQZ5"/>
<dbReference type="TreeFam" id="TF320705"/>
<dbReference type="PathwayCommons" id="Q9NQZ5"/>
<dbReference type="Reactome" id="R-HSA-1483191">
    <property type="pathway name" value="Synthesis of PC"/>
</dbReference>
<dbReference type="Reactome" id="R-HSA-2142789">
    <property type="pathway name" value="Ubiquinol biosynthesis"/>
</dbReference>
<dbReference type="Reactome" id="R-HSA-9837999">
    <property type="pathway name" value="Mitochondrial protein degradation"/>
</dbReference>
<dbReference type="SignaLink" id="Q9NQZ5"/>
<dbReference type="BioGRID-ORCS" id="56910">
    <property type="hits" value="281 hits in 1158 CRISPR screens"/>
</dbReference>
<dbReference type="ChiTaRS" id="STARD7">
    <property type="organism name" value="human"/>
</dbReference>
<dbReference type="GeneWiki" id="STARD7"/>
<dbReference type="GenomeRNAi" id="56910"/>
<dbReference type="Pharos" id="Q9NQZ5">
    <property type="development level" value="Tbio"/>
</dbReference>
<dbReference type="PRO" id="PR:Q9NQZ5"/>
<dbReference type="Proteomes" id="UP000005640">
    <property type="component" value="Chromosome 2"/>
</dbReference>
<dbReference type="RNAct" id="Q9NQZ5">
    <property type="molecule type" value="protein"/>
</dbReference>
<dbReference type="Bgee" id="ENSG00000084090">
    <property type="expression patterns" value="Expressed in secondary oocyte and 209 other cell types or tissues"/>
</dbReference>
<dbReference type="ExpressionAtlas" id="Q9NQZ5">
    <property type="expression patterns" value="baseline and differential"/>
</dbReference>
<dbReference type="GO" id="GO:0005576">
    <property type="term" value="C:extracellular region"/>
    <property type="evidence" value="ECO:0007669"/>
    <property type="project" value="GOC"/>
</dbReference>
<dbReference type="GO" id="GO:0005741">
    <property type="term" value="C:mitochondrial outer membrane"/>
    <property type="evidence" value="ECO:0000304"/>
    <property type="project" value="Reactome"/>
</dbReference>
<dbReference type="GO" id="GO:0005739">
    <property type="term" value="C:mitochondrion"/>
    <property type="evidence" value="ECO:0006056"/>
    <property type="project" value="FlyBase"/>
</dbReference>
<dbReference type="GO" id="GO:0008289">
    <property type="term" value="F:lipid binding"/>
    <property type="evidence" value="ECO:0007669"/>
    <property type="project" value="InterPro"/>
</dbReference>
<dbReference type="GO" id="GO:0120013">
    <property type="term" value="F:lipid transfer activity"/>
    <property type="evidence" value="ECO:0000304"/>
    <property type="project" value="Reactome"/>
</dbReference>
<dbReference type="GO" id="GO:0140104">
    <property type="term" value="F:molecular carrier activity"/>
    <property type="evidence" value="ECO:0007669"/>
    <property type="project" value="Ensembl"/>
</dbReference>
<dbReference type="GO" id="GO:0061436">
    <property type="term" value="P:establishment of skin barrier"/>
    <property type="evidence" value="ECO:0007669"/>
    <property type="project" value="Ensembl"/>
</dbReference>
<dbReference type="GO" id="GO:0006954">
    <property type="term" value="P:inflammatory response"/>
    <property type="evidence" value="ECO:0007669"/>
    <property type="project" value="Ensembl"/>
</dbReference>
<dbReference type="GO" id="GO:0120197">
    <property type="term" value="P:mucociliary clearance"/>
    <property type="evidence" value="ECO:0007669"/>
    <property type="project" value="Ensembl"/>
</dbReference>
<dbReference type="GO" id="GO:0001773">
    <property type="term" value="P:myeloid dendritic cell activation"/>
    <property type="evidence" value="ECO:0007669"/>
    <property type="project" value="Ensembl"/>
</dbReference>
<dbReference type="GO" id="GO:0042092">
    <property type="term" value="P:type 2 immune response"/>
    <property type="evidence" value="ECO:0007669"/>
    <property type="project" value="Ensembl"/>
</dbReference>
<dbReference type="GO" id="GO:0006744">
    <property type="term" value="P:ubiquinone biosynthetic process"/>
    <property type="evidence" value="ECO:0000304"/>
    <property type="project" value="Reactome"/>
</dbReference>
<dbReference type="CDD" id="cd08911">
    <property type="entry name" value="START_STARD7-like"/>
    <property type="match status" value="1"/>
</dbReference>
<dbReference type="FunFam" id="3.30.530.20:FF:000016">
    <property type="entry name" value="StAR-related lipid transfer protein 7, mitochondrial"/>
    <property type="match status" value="1"/>
</dbReference>
<dbReference type="Gene3D" id="3.30.530.20">
    <property type="match status" value="1"/>
</dbReference>
<dbReference type="InterPro" id="IPR023393">
    <property type="entry name" value="START-like_dom_sf"/>
</dbReference>
<dbReference type="InterPro" id="IPR002913">
    <property type="entry name" value="START_lipid-bd_dom"/>
</dbReference>
<dbReference type="InterPro" id="IPR051213">
    <property type="entry name" value="START_lipid_transfer"/>
</dbReference>
<dbReference type="InterPro" id="IPR041949">
    <property type="entry name" value="START_STARD7"/>
</dbReference>
<dbReference type="PANTHER" id="PTHR19308">
    <property type="entry name" value="PHOSPHATIDYLCHOLINE TRANSFER PROTEIN"/>
    <property type="match status" value="1"/>
</dbReference>
<dbReference type="PANTHER" id="PTHR19308:SF8">
    <property type="entry name" value="STAR-RELATED LIPID TRANSFER PROTEIN 7, MITOCHONDRIAL"/>
    <property type="match status" value="1"/>
</dbReference>
<dbReference type="Pfam" id="PF01852">
    <property type="entry name" value="START"/>
    <property type="match status" value="1"/>
</dbReference>
<dbReference type="SMART" id="SM00234">
    <property type="entry name" value="START"/>
    <property type="match status" value="1"/>
</dbReference>
<dbReference type="SUPFAM" id="SSF55961">
    <property type="entry name" value="Bet v1-like"/>
    <property type="match status" value="1"/>
</dbReference>
<dbReference type="PROSITE" id="PS50848">
    <property type="entry name" value="START"/>
    <property type="match status" value="1"/>
</dbReference>
<protein>
    <recommendedName>
        <fullName>StAR-related lipid transfer protein 7, mitochondrial</fullName>
    </recommendedName>
    <alternativeName>
        <fullName>Gestational trophoblastic tumor protein 1</fullName>
    </alternativeName>
    <alternativeName>
        <fullName>START domain-containing protein 7</fullName>
        <shortName>StARD7</shortName>
    </alternativeName>
</protein>
<gene>
    <name type="primary">STARD7</name>
    <name type="synonym">GTT1</name>
</gene>
<reference key="1">
    <citation type="journal article" date="2004" name="Placenta">
        <title>GTT1/StarD7, a novel phosphatidylcholine transfer protein-like highly expressed in gestational trophoblastic tumour: cloning and characterization.</title>
        <authorList>
            <person name="Durand S."/>
            <person name="Angeletti S."/>
            <person name="Genti-Raimondi S."/>
        </authorList>
    </citation>
    <scope>NUCLEOTIDE SEQUENCE [MRNA]</scope>
    <source>
        <tissue>Cervix carcinoma</tissue>
    </source>
</reference>
<reference key="2">
    <citation type="journal article" date="2005" name="Nature">
        <title>Generation and annotation of the DNA sequences of human chromosomes 2 and 4.</title>
        <authorList>
            <person name="Hillier L.W."/>
            <person name="Graves T.A."/>
            <person name="Fulton R.S."/>
            <person name="Fulton L.A."/>
            <person name="Pepin K.H."/>
            <person name="Minx P."/>
            <person name="Wagner-McPherson C."/>
            <person name="Layman D."/>
            <person name="Wylie K."/>
            <person name="Sekhon M."/>
            <person name="Becker M.C."/>
            <person name="Fewell G.A."/>
            <person name="Delehaunty K.D."/>
            <person name="Miner T.L."/>
            <person name="Nash W.E."/>
            <person name="Kremitzki C."/>
            <person name="Oddy L."/>
            <person name="Du H."/>
            <person name="Sun H."/>
            <person name="Bradshaw-Cordum H."/>
            <person name="Ali J."/>
            <person name="Carter J."/>
            <person name="Cordes M."/>
            <person name="Harris A."/>
            <person name="Isak A."/>
            <person name="van Brunt A."/>
            <person name="Nguyen C."/>
            <person name="Du F."/>
            <person name="Courtney L."/>
            <person name="Kalicki J."/>
            <person name="Ozersky P."/>
            <person name="Abbott S."/>
            <person name="Armstrong J."/>
            <person name="Belter E.A."/>
            <person name="Caruso L."/>
            <person name="Cedroni M."/>
            <person name="Cotton M."/>
            <person name="Davidson T."/>
            <person name="Desai A."/>
            <person name="Elliott G."/>
            <person name="Erb T."/>
            <person name="Fronick C."/>
            <person name="Gaige T."/>
            <person name="Haakenson W."/>
            <person name="Haglund K."/>
            <person name="Holmes A."/>
            <person name="Harkins R."/>
            <person name="Kim K."/>
            <person name="Kruchowski S.S."/>
            <person name="Strong C.M."/>
            <person name="Grewal N."/>
            <person name="Goyea E."/>
            <person name="Hou S."/>
            <person name="Levy A."/>
            <person name="Martinka S."/>
            <person name="Mead K."/>
            <person name="McLellan M.D."/>
            <person name="Meyer R."/>
            <person name="Randall-Maher J."/>
            <person name="Tomlinson C."/>
            <person name="Dauphin-Kohlberg S."/>
            <person name="Kozlowicz-Reilly A."/>
            <person name="Shah N."/>
            <person name="Swearengen-Shahid S."/>
            <person name="Snider J."/>
            <person name="Strong J.T."/>
            <person name="Thompson J."/>
            <person name="Yoakum M."/>
            <person name="Leonard S."/>
            <person name="Pearman C."/>
            <person name="Trani L."/>
            <person name="Radionenko M."/>
            <person name="Waligorski J.E."/>
            <person name="Wang C."/>
            <person name="Rock S.M."/>
            <person name="Tin-Wollam A.-M."/>
            <person name="Maupin R."/>
            <person name="Latreille P."/>
            <person name="Wendl M.C."/>
            <person name="Yang S.-P."/>
            <person name="Pohl C."/>
            <person name="Wallis J.W."/>
            <person name="Spieth J."/>
            <person name="Bieri T.A."/>
            <person name="Berkowicz N."/>
            <person name="Nelson J.O."/>
            <person name="Osborne J."/>
            <person name="Ding L."/>
            <person name="Meyer R."/>
            <person name="Sabo A."/>
            <person name="Shotland Y."/>
            <person name="Sinha P."/>
            <person name="Wohldmann P.E."/>
            <person name="Cook L.L."/>
            <person name="Hickenbotham M.T."/>
            <person name="Eldred J."/>
            <person name="Williams D."/>
            <person name="Jones T.A."/>
            <person name="She X."/>
            <person name="Ciccarelli F.D."/>
            <person name="Izaurralde E."/>
            <person name="Taylor J."/>
            <person name="Schmutz J."/>
            <person name="Myers R.M."/>
            <person name="Cox D.R."/>
            <person name="Huang X."/>
            <person name="McPherson J.D."/>
            <person name="Mardis E.R."/>
            <person name="Clifton S.W."/>
            <person name="Warren W.C."/>
            <person name="Chinwalla A.T."/>
            <person name="Eddy S.R."/>
            <person name="Marra M.A."/>
            <person name="Ovcharenko I."/>
            <person name="Furey T.S."/>
            <person name="Miller W."/>
            <person name="Eichler E.E."/>
            <person name="Bork P."/>
            <person name="Suyama M."/>
            <person name="Torrents D."/>
            <person name="Waterston R.H."/>
            <person name="Wilson R.K."/>
        </authorList>
    </citation>
    <scope>NUCLEOTIDE SEQUENCE [LARGE SCALE GENOMIC DNA]</scope>
</reference>
<reference key="3">
    <citation type="submission" date="2005-09" db="EMBL/GenBank/DDBJ databases">
        <authorList>
            <person name="Mural R.J."/>
            <person name="Istrail S."/>
            <person name="Sutton G.G."/>
            <person name="Florea L."/>
            <person name="Halpern A.L."/>
            <person name="Mobarry C.M."/>
            <person name="Lippert R."/>
            <person name="Walenz B."/>
            <person name="Shatkay H."/>
            <person name="Dew I."/>
            <person name="Miller J.R."/>
            <person name="Flanigan M.J."/>
            <person name="Edwards N.J."/>
            <person name="Bolanos R."/>
            <person name="Fasulo D."/>
            <person name="Halldorsson B.V."/>
            <person name="Hannenhalli S."/>
            <person name="Turner R."/>
            <person name="Yooseph S."/>
            <person name="Lu F."/>
            <person name="Nusskern D.R."/>
            <person name="Shue B.C."/>
            <person name="Zheng X.H."/>
            <person name="Zhong F."/>
            <person name="Delcher A.L."/>
            <person name="Huson D.H."/>
            <person name="Kravitz S.A."/>
            <person name="Mouchard L."/>
            <person name="Reinert K."/>
            <person name="Remington K.A."/>
            <person name="Clark A.G."/>
            <person name="Waterman M.S."/>
            <person name="Eichler E.E."/>
            <person name="Adams M.D."/>
            <person name="Hunkapiller M.W."/>
            <person name="Myers E.W."/>
            <person name="Venter J.C."/>
        </authorList>
    </citation>
    <scope>NUCLEOTIDE SEQUENCE [LARGE SCALE GENOMIC DNA]</scope>
</reference>
<reference key="4">
    <citation type="journal article" date="2004" name="Genome Res.">
        <title>The status, quality, and expansion of the NIH full-length cDNA project: the Mammalian Gene Collection (MGC).</title>
        <authorList>
            <consortium name="The MGC Project Team"/>
        </authorList>
    </citation>
    <scope>NUCLEOTIDE SEQUENCE [LARGE SCALE MRNA]</scope>
    <scope>VARIANT PRO-140</scope>
    <source>
        <tissue>Brain</tissue>
        <tissue>Lymph</tissue>
        <tissue>Placenta</tissue>
        <tissue>Skin</tissue>
        <tissue>Uterus</tissue>
    </source>
</reference>
<reference key="5">
    <citation type="journal article" date="2011" name="BMC Syst. Biol.">
        <title>Initial characterization of the human central proteome.</title>
        <authorList>
            <person name="Burkard T.R."/>
            <person name="Planyavsky M."/>
            <person name="Kaupe I."/>
            <person name="Breitwieser F.P."/>
            <person name="Buerckstuemmer T."/>
            <person name="Bennett K.L."/>
            <person name="Superti-Furga G."/>
            <person name="Colinge J."/>
        </authorList>
    </citation>
    <scope>IDENTIFICATION BY MASS SPECTROMETRY [LARGE SCALE ANALYSIS]</scope>
</reference>
<reference key="6">
    <citation type="journal article" date="2015" name="J. Immunol.">
        <title>Haploinsufficiency for Stard7 is associated with enhanced allergic responses in lung and skin.</title>
        <authorList>
            <person name="Yang L."/>
            <person name="Lewkowich I."/>
            <person name="Apsley K."/>
            <person name="Fritz J.M."/>
            <person name="Wills-Karp M."/>
            <person name="Weaver T.E."/>
        </authorList>
    </citation>
    <scope>TISSUE SPECIFICITY</scope>
</reference>
<reference key="7">
    <citation type="journal article" date="2017" name="Nat. Cell Biol.">
        <title>PARL mediates Smac proteolytic maturation in mitochondria to promote apoptosis.</title>
        <authorList>
            <person name="Saita S."/>
            <person name="Nolte H."/>
            <person name="Fiedler K.U."/>
            <person name="Kashkar H."/>
            <person name="Venne A.S."/>
            <person name="Zahedi R.P."/>
            <person name="Krueger M."/>
            <person name="Langer T."/>
        </authorList>
    </citation>
    <scope>PROTEOLYTIC CLEAVAGE</scope>
</reference>
<accession>Q9NQZ5</accession>
<accession>D3DXG9</accession>
<accession>Q53T44</accession>
<accession>Q6GU43</accession>
<accession>Q969M6</accession>
<feature type="transit peptide" description="Mitochondrion" evidence="2">
    <location>
        <begin position="1"/>
        <end position="58"/>
    </location>
</feature>
<feature type="chain" id="PRO_0000220674" description="StAR-related lipid transfer protein 7, mitochondrial">
    <location>
        <begin position="59"/>
        <end position="370"/>
    </location>
</feature>
<feature type="domain" description="START" evidence="3">
    <location>
        <begin position="112"/>
        <end position="327"/>
    </location>
</feature>
<feature type="region of interest" description="Disordered" evidence="4">
    <location>
        <begin position="111"/>
        <end position="138"/>
    </location>
</feature>
<feature type="region of interest" description="Disordered" evidence="4">
    <location>
        <begin position="343"/>
        <end position="370"/>
    </location>
</feature>
<feature type="coiled-coil region" evidence="2">
    <location>
        <begin position="86"/>
        <end position="111"/>
    </location>
</feature>
<feature type="site" description="Cleavage; by PARL" evidence="7">
    <location>
        <begin position="77"/>
        <end position="78"/>
    </location>
</feature>
<feature type="sequence variant" id="VAR_020345" description="In dbSNP:rs2276650." evidence="5">
    <original>R</original>
    <variation>P</variation>
    <location>
        <position position="140"/>
    </location>
</feature>
<feature type="sequence conflict" description="In Ref. 1; AAF81750." evidence="8" ref="1">
    <location>
        <begin position="72"/>
        <end position="73"/>
    </location>
</feature>
<comment type="function">
    <text evidence="1">May play a protective role in mucosal tissues by preventing exaggerated allergic responses.</text>
</comment>
<comment type="interaction">
    <interactant intactId="EBI-4402938">
        <id>Q9NQZ5</id>
    </interactant>
    <interactant intactId="EBI-9658477">
        <id>Q86XE5</id>
        <label>HOGA1</label>
    </interactant>
    <organismsDiffer>false</organismsDiffer>
    <experiments>2</experiments>
</comment>
<comment type="interaction">
    <interactant intactId="EBI-4402938">
        <id>Q9NQZ5</id>
    </interactant>
    <interactant intactId="EBI-3915702">
        <id>Q9H3S5</id>
        <label>PIGM</label>
    </interactant>
    <organismsDiffer>false</organismsDiffer>
    <experiments>2</experiments>
</comment>
<comment type="subcellular location">
    <subcellularLocation>
        <location evidence="8">Mitochondrion</location>
    </subcellularLocation>
</comment>
<comment type="tissue specificity">
    <text evidence="6">Expressed in nasal epithelial cells. Down-regulated in nasal epithelial cells in patients experiencing an asthma exacerbation as compared to stable asthmatics and healthy controls.</text>
</comment>
<comment type="PTM">
    <text evidence="7">Proteolytically cleaved by PARL.</text>
</comment>
<comment type="sequence caution" evidence="8">
    <conflict type="frameshift">
        <sequence resource="EMBL-CDS" id="AAF81750"/>
    </conflict>
</comment>
<comment type="sequence caution" evidence="8">
    <conflict type="erroneous initiation">
        <sequence resource="EMBL-CDS" id="AAH07894"/>
    </conflict>
</comment>
<comment type="sequence caution" evidence="8">
    <conflict type="erroneous initiation">
        <sequence resource="EMBL-CDS" id="AAH08894"/>
    </conflict>
</comment>
<comment type="sequence caution" evidence="8">
    <conflict type="erroneous initiation">
        <sequence resource="EMBL-CDS" id="AAH09998"/>
    </conflict>
</comment>
<comment type="sequence caution" evidence="8">
    <conflict type="erroneous initiation">
        <sequence resource="EMBL-CDS" id="AAH12774"/>
    </conflict>
</comment>
<comment type="sequence caution" evidence="8">
    <conflict type="erroneous initiation">
        <sequence resource="EMBL-CDS" id="AAH12793"/>
    </conflict>
</comment>
<comment type="sequence caution" evidence="8">
    <conflict type="erroneous initiation">
        <sequence resource="EMBL-CDS" id="AAH13279"/>
    </conflict>
</comment>
<comment type="sequence caution" evidence="8">
    <conflict type="erroneous initiation">
        <sequence resource="EMBL-CDS" id="AAH14076"/>
    </conflict>
</comment>
<comment type="sequence caution" evidence="8">
    <conflict type="erroneous initiation">
        <sequence resource="EMBL-CDS" id="AAH14274"/>
    </conflict>
</comment>
<comment type="sequence caution" evidence="8">
    <conflict type="erroneous initiation">
        <sequence resource="EMBL-CDS" id="AAH32106"/>
    </conflict>
</comment>
<organism>
    <name type="scientific">Homo sapiens</name>
    <name type="common">Human</name>
    <dbReference type="NCBI Taxonomy" id="9606"/>
    <lineage>
        <taxon>Eukaryota</taxon>
        <taxon>Metazoa</taxon>
        <taxon>Chordata</taxon>
        <taxon>Craniata</taxon>
        <taxon>Vertebrata</taxon>
        <taxon>Euteleostomi</taxon>
        <taxon>Mammalia</taxon>
        <taxon>Eutheria</taxon>
        <taxon>Euarchontoglires</taxon>
        <taxon>Primates</taxon>
        <taxon>Haplorrhini</taxon>
        <taxon>Catarrhini</taxon>
        <taxon>Hominidae</taxon>
        <taxon>Homo</taxon>
    </lineage>
</organism>
<evidence type="ECO:0000250" key="1">
    <source>
        <dbReference type="UniProtKB" id="Q8R1R3"/>
    </source>
</evidence>
<evidence type="ECO:0000255" key="2"/>
<evidence type="ECO:0000255" key="3">
    <source>
        <dbReference type="PROSITE-ProRule" id="PRU00197"/>
    </source>
</evidence>
<evidence type="ECO:0000256" key="4">
    <source>
        <dbReference type="SAM" id="MobiDB-lite"/>
    </source>
</evidence>
<evidence type="ECO:0000269" key="5">
    <source>
    </source>
</evidence>
<evidence type="ECO:0000269" key="6">
    <source>
    </source>
</evidence>
<evidence type="ECO:0000269" key="7">
    <source>
    </source>
</evidence>
<evidence type="ECO:0000305" key="8"/>
<proteinExistence type="evidence at protein level"/>
<name>STAR7_HUMAN</name>
<keyword id="KW-0175">Coiled coil</keyword>
<keyword id="KW-0496">Mitochondrion</keyword>
<keyword id="KW-1267">Proteomics identification</keyword>
<keyword id="KW-1185">Reference proteome</keyword>
<keyword id="KW-0809">Transit peptide</keyword>
<sequence length="370" mass="43113">MLPRRLLAAWLAGTRGGGLLALLANQCRFVTGLRVRRAQQIAQLYGRLYSESSRRVLLGRLWRRLHGRPGHASALMAALAGVFVWDEERIQEEELQRSINEMKRLEEMSNMFQSSGVQHHPPEPKAQTEGNEDSEGKEQRWEMVMDKKHFKLWRRPITGTHLYQYRVFGTYTDVTPRQFFNVQLDTEYRKKWDALVIKLEVIERDVVSGSEVLHWVTHFPYPMYSRDYVYVRRYSVDQENNMMVLVSRAVEHPSVPESPEFVRVRSYESQMVIRPHKSFDENGFDYLLTYSDNPQTVFPRYCVSWMVSSGMPDFLEKLHMATLKAKNMEIKVKDYISAKPLEMSSEAKATSQSSERKNEGSCGPARIEYA</sequence>